<dbReference type="EMBL" id="CT978603">
    <property type="protein sequence ID" value="CAK27319.1"/>
    <property type="molecule type" value="Genomic_DNA"/>
</dbReference>
<dbReference type="SMR" id="A5GR10"/>
<dbReference type="STRING" id="316278.SynRCC307_0416"/>
<dbReference type="KEGG" id="syr:SynRCC307_0416"/>
<dbReference type="eggNOG" id="COG1327">
    <property type="taxonomic scope" value="Bacteria"/>
</dbReference>
<dbReference type="HOGENOM" id="CLU_108412_0_0_3"/>
<dbReference type="OrthoDB" id="9807461at2"/>
<dbReference type="Proteomes" id="UP000001115">
    <property type="component" value="Chromosome"/>
</dbReference>
<dbReference type="GO" id="GO:0005524">
    <property type="term" value="F:ATP binding"/>
    <property type="evidence" value="ECO:0007669"/>
    <property type="project" value="UniProtKB-KW"/>
</dbReference>
<dbReference type="GO" id="GO:0003677">
    <property type="term" value="F:DNA binding"/>
    <property type="evidence" value="ECO:0007669"/>
    <property type="project" value="UniProtKB-KW"/>
</dbReference>
<dbReference type="GO" id="GO:0008270">
    <property type="term" value="F:zinc ion binding"/>
    <property type="evidence" value="ECO:0007669"/>
    <property type="project" value="UniProtKB-UniRule"/>
</dbReference>
<dbReference type="GO" id="GO:0045892">
    <property type="term" value="P:negative regulation of DNA-templated transcription"/>
    <property type="evidence" value="ECO:0007669"/>
    <property type="project" value="UniProtKB-UniRule"/>
</dbReference>
<dbReference type="HAMAP" id="MF_00440">
    <property type="entry name" value="NrdR"/>
    <property type="match status" value="1"/>
</dbReference>
<dbReference type="InterPro" id="IPR005144">
    <property type="entry name" value="ATP-cone_dom"/>
</dbReference>
<dbReference type="InterPro" id="IPR055173">
    <property type="entry name" value="NrdR-like_N"/>
</dbReference>
<dbReference type="InterPro" id="IPR003796">
    <property type="entry name" value="RNR_NrdR-like"/>
</dbReference>
<dbReference type="NCBIfam" id="TIGR00244">
    <property type="entry name" value="transcriptional regulator NrdR"/>
    <property type="match status" value="1"/>
</dbReference>
<dbReference type="PANTHER" id="PTHR30455">
    <property type="entry name" value="TRANSCRIPTIONAL REPRESSOR NRDR"/>
    <property type="match status" value="1"/>
</dbReference>
<dbReference type="PANTHER" id="PTHR30455:SF2">
    <property type="entry name" value="TRANSCRIPTIONAL REPRESSOR NRDR"/>
    <property type="match status" value="1"/>
</dbReference>
<dbReference type="Pfam" id="PF03477">
    <property type="entry name" value="ATP-cone"/>
    <property type="match status" value="1"/>
</dbReference>
<dbReference type="Pfam" id="PF22811">
    <property type="entry name" value="Zn_ribbon_NrdR"/>
    <property type="match status" value="1"/>
</dbReference>
<dbReference type="PROSITE" id="PS51161">
    <property type="entry name" value="ATP_CONE"/>
    <property type="match status" value="1"/>
</dbReference>
<organism>
    <name type="scientific">Synechococcus sp. (strain RCC307)</name>
    <dbReference type="NCBI Taxonomy" id="316278"/>
    <lineage>
        <taxon>Bacteria</taxon>
        <taxon>Bacillati</taxon>
        <taxon>Cyanobacteriota</taxon>
        <taxon>Cyanophyceae</taxon>
        <taxon>Synechococcales</taxon>
        <taxon>Synechococcaceae</taxon>
        <taxon>Synechococcus</taxon>
    </lineage>
</organism>
<protein>
    <recommendedName>
        <fullName evidence="1">Transcriptional repressor NrdR</fullName>
    </recommendedName>
</protein>
<sequence length="161" mass="18469">MQCPSCQHTDSRVLESRAADSGKSVRRRRECLNCEFRFTTYERVETMTITVVKRSGTRETFSRSKLLTGLVRACEKTGLETNRLELLVEEIELQLQQRNQKEITSQQLGDLVLEELGDLSEVAYVRFASVYGKFSGISDFITTLDALRQRNQVKRQLAKIS</sequence>
<accession>A5GR10</accession>
<name>NRDR_SYNR3</name>
<comment type="function">
    <text evidence="1">Negatively regulates transcription of bacterial ribonucleotide reductase nrd genes and operons by binding to NrdR-boxes.</text>
</comment>
<comment type="cofactor">
    <cofactor evidence="1">
        <name>Zn(2+)</name>
        <dbReference type="ChEBI" id="CHEBI:29105"/>
    </cofactor>
    <text evidence="1">Binds 1 zinc ion.</text>
</comment>
<comment type="similarity">
    <text evidence="1">Belongs to the NrdR family.</text>
</comment>
<proteinExistence type="inferred from homology"/>
<evidence type="ECO:0000255" key="1">
    <source>
        <dbReference type="HAMAP-Rule" id="MF_00440"/>
    </source>
</evidence>
<keyword id="KW-0067">ATP-binding</keyword>
<keyword id="KW-0238">DNA-binding</keyword>
<keyword id="KW-0479">Metal-binding</keyword>
<keyword id="KW-0547">Nucleotide-binding</keyword>
<keyword id="KW-1185">Reference proteome</keyword>
<keyword id="KW-0678">Repressor</keyword>
<keyword id="KW-0804">Transcription</keyword>
<keyword id="KW-0805">Transcription regulation</keyword>
<keyword id="KW-0862">Zinc</keyword>
<keyword id="KW-0863">Zinc-finger</keyword>
<gene>
    <name evidence="1" type="primary">nrdR</name>
    <name type="ordered locus">SynRCC307_0416</name>
</gene>
<reference key="1">
    <citation type="submission" date="2006-05" db="EMBL/GenBank/DDBJ databases">
        <authorList>
            <consortium name="Genoscope"/>
        </authorList>
    </citation>
    <scope>NUCLEOTIDE SEQUENCE [LARGE SCALE GENOMIC DNA]</scope>
    <source>
        <strain>RCC307</strain>
    </source>
</reference>
<feature type="chain" id="PRO_1000080849" description="Transcriptional repressor NrdR">
    <location>
        <begin position="1"/>
        <end position="161"/>
    </location>
</feature>
<feature type="domain" description="ATP-cone" evidence="1">
    <location>
        <begin position="49"/>
        <end position="139"/>
    </location>
</feature>
<feature type="zinc finger region" evidence="1">
    <location>
        <begin position="3"/>
        <end position="34"/>
    </location>
</feature>